<feature type="chain" id="PRO_1000122004" description="Chromosomal replication initiator protein DnaA">
    <location>
        <begin position="1"/>
        <end position="514"/>
    </location>
</feature>
<feature type="region of interest" description="Domain I, interacts with DnaA modulators" evidence="1">
    <location>
        <begin position="1"/>
        <end position="90"/>
    </location>
</feature>
<feature type="region of interest" description="Domain II" evidence="1">
    <location>
        <begin position="91"/>
        <end position="177"/>
    </location>
</feature>
<feature type="region of interest" description="Domain III, AAA+ region" evidence="1">
    <location>
        <begin position="178"/>
        <end position="394"/>
    </location>
</feature>
<feature type="region of interest" description="Domain IV, binds dsDNA" evidence="1">
    <location>
        <begin position="395"/>
        <end position="514"/>
    </location>
</feature>
<feature type="binding site" evidence="1">
    <location>
        <position position="222"/>
    </location>
    <ligand>
        <name>ATP</name>
        <dbReference type="ChEBI" id="CHEBI:30616"/>
    </ligand>
</feature>
<feature type="binding site" evidence="1">
    <location>
        <position position="224"/>
    </location>
    <ligand>
        <name>ATP</name>
        <dbReference type="ChEBI" id="CHEBI:30616"/>
    </ligand>
</feature>
<feature type="binding site" evidence="1">
    <location>
        <position position="225"/>
    </location>
    <ligand>
        <name>ATP</name>
        <dbReference type="ChEBI" id="CHEBI:30616"/>
    </ligand>
</feature>
<feature type="binding site" evidence="1">
    <location>
        <position position="226"/>
    </location>
    <ligand>
        <name>ATP</name>
        <dbReference type="ChEBI" id="CHEBI:30616"/>
    </ligand>
</feature>
<gene>
    <name evidence="1" type="primary">dnaA</name>
    <name type="ordered locus">PLES_00001</name>
</gene>
<keyword id="KW-0067">ATP-binding</keyword>
<keyword id="KW-0963">Cytoplasm</keyword>
<keyword id="KW-0235">DNA replication</keyword>
<keyword id="KW-0238">DNA-binding</keyword>
<keyword id="KW-0446">Lipid-binding</keyword>
<keyword id="KW-0547">Nucleotide-binding</keyword>
<accession>B7V0N6</accession>
<organism>
    <name type="scientific">Pseudomonas aeruginosa (strain LESB58)</name>
    <dbReference type="NCBI Taxonomy" id="557722"/>
    <lineage>
        <taxon>Bacteria</taxon>
        <taxon>Pseudomonadati</taxon>
        <taxon>Pseudomonadota</taxon>
        <taxon>Gammaproteobacteria</taxon>
        <taxon>Pseudomonadales</taxon>
        <taxon>Pseudomonadaceae</taxon>
        <taxon>Pseudomonas</taxon>
    </lineage>
</organism>
<evidence type="ECO:0000255" key="1">
    <source>
        <dbReference type="HAMAP-Rule" id="MF_00377"/>
    </source>
</evidence>
<dbReference type="EMBL" id="FM209186">
    <property type="protein sequence ID" value="CAW24728.1"/>
    <property type="molecule type" value="Genomic_DNA"/>
</dbReference>
<dbReference type="RefSeq" id="WP_003109151.1">
    <property type="nucleotide sequence ID" value="NC_011770.1"/>
</dbReference>
<dbReference type="SMR" id="B7V0N6"/>
<dbReference type="KEGG" id="pag:PLES_00001"/>
<dbReference type="HOGENOM" id="CLU_026910_0_1_6"/>
<dbReference type="GO" id="GO:0005737">
    <property type="term" value="C:cytoplasm"/>
    <property type="evidence" value="ECO:0007669"/>
    <property type="project" value="UniProtKB-SubCell"/>
</dbReference>
<dbReference type="GO" id="GO:0005886">
    <property type="term" value="C:plasma membrane"/>
    <property type="evidence" value="ECO:0007669"/>
    <property type="project" value="TreeGrafter"/>
</dbReference>
<dbReference type="GO" id="GO:0005524">
    <property type="term" value="F:ATP binding"/>
    <property type="evidence" value="ECO:0007669"/>
    <property type="project" value="UniProtKB-UniRule"/>
</dbReference>
<dbReference type="GO" id="GO:0016887">
    <property type="term" value="F:ATP hydrolysis activity"/>
    <property type="evidence" value="ECO:0007669"/>
    <property type="project" value="InterPro"/>
</dbReference>
<dbReference type="GO" id="GO:0003688">
    <property type="term" value="F:DNA replication origin binding"/>
    <property type="evidence" value="ECO:0007669"/>
    <property type="project" value="UniProtKB-UniRule"/>
</dbReference>
<dbReference type="GO" id="GO:0008289">
    <property type="term" value="F:lipid binding"/>
    <property type="evidence" value="ECO:0007669"/>
    <property type="project" value="UniProtKB-KW"/>
</dbReference>
<dbReference type="GO" id="GO:0006270">
    <property type="term" value="P:DNA replication initiation"/>
    <property type="evidence" value="ECO:0007669"/>
    <property type="project" value="UniProtKB-UniRule"/>
</dbReference>
<dbReference type="GO" id="GO:0006275">
    <property type="term" value="P:regulation of DNA replication"/>
    <property type="evidence" value="ECO:0007669"/>
    <property type="project" value="UniProtKB-UniRule"/>
</dbReference>
<dbReference type="CDD" id="cd00009">
    <property type="entry name" value="AAA"/>
    <property type="match status" value="1"/>
</dbReference>
<dbReference type="CDD" id="cd06571">
    <property type="entry name" value="Bac_DnaA_C"/>
    <property type="match status" value="1"/>
</dbReference>
<dbReference type="FunFam" id="1.10.1750.10:FF:000001">
    <property type="entry name" value="Chromosomal replication initiator protein DnaA"/>
    <property type="match status" value="1"/>
</dbReference>
<dbReference type="FunFam" id="1.10.8.60:FF:000003">
    <property type="entry name" value="Chromosomal replication initiator protein DnaA"/>
    <property type="match status" value="1"/>
</dbReference>
<dbReference type="FunFam" id="3.30.300.180:FF:000001">
    <property type="entry name" value="Chromosomal replication initiator protein DnaA"/>
    <property type="match status" value="1"/>
</dbReference>
<dbReference type="FunFam" id="3.40.50.300:FF:000103">
    <property type="entry name" value="Chromosomal replication initiator protein DnaA"/>
    <property type="match status" value="1"/>
</dbReference>
<dbReference type="Gene3D" id="1.10.1750.10">
    <property type="match status" value="1"/>
</dbReference>
<dbReference type="Gene3D" id="1.10.8.60">
    <property type="match status" value="1"/>
</dbReference>
<dbReference type="Gene3D" id="3.30.300.180">
    <property type="match status" value="1"/>
</dbReference>
<dbReference type="Gene3D" id="3.40.50.300">
    <property type="entry name" value="P-loop containing nucleotide triphosphate hydrolases"/>
    <property type="match status" value="1"/>
</dbReference>
<dbReference type="HAMAP" id="MF_00377">
    <property type="entry name" value="DnaA_bact"/>
    <property type="match status" value="1"/>
</dbReference>
<dbReference type="InterPro" id="IPR003593">
    <property type="entry name" value="AAA+_ATPase"/>
</dbReference>
<dbReference type="InterPro" id="IPR001957">
    <property type="entry name" value="Chromosome_initiator_DnaA"/>
</dbReference>
<dbReference type="InterPro" id="IPR020591">
    <property type="entry name" value="Chromosome_initiator_DnaA-like"/>
</dbReference>
<dbReference type="InterPro" id="IPR018312">
    <property type="entry name" value="Chromosome_initiator_DnaA_CS"/>
</dbReference>
<dbReference type="InterPro" id="IPR013159">
    <property type="entry name" value="DnaA_C"/>
</dbReference>
<dbReference type="InterPro" id="IPR013317">
    <property type="entry name" value="DnaA_dom"/>
</dbReference>
<dbReference type="InterPro" id="IPR024633">
    <property type="entry name" value="DnaA_N_dom"/>
</dbReference>
<dbReference type="InterPro" id="IPR038454">
    <property type="entry name" value="DnaA_N_sf"/>
</dbReference>
<dbReference type="InterPro" id="IPR027417">
    <property type="entry name" value="P-loop_NTPase"/>
</dbReference>
<dbReference type="InterPro" id="IPR010921">
    <property type="entry name" value="Trp_repressor/repl_initiator"/>
</dbReference>
<dbReference type="NCBIfam" id="TIGR00362">
    <property type="entry name" value="DnaA"/>
    <property type="match status" value="1"/>
</dbReference>
<dbReference type="PANTHER" id="PTHR30050">
    <property type="entry name" value="CHROMOSOMAL REPLICATION INITIATOR PROTEIN DNAA"/>
    <property type="match status" value="1"/>
</dbReference>
<dbReference type="PANTHER" id="PTHR30050:SF2">
    <property type="entry name" value="CHROMOSOMAL REPLICATION INITIATOR PROTEIN DNAA"/>
    <property type="match status" value="1"/>
</dbReference>
<dbReference type="Pfam" id="PF00308">
    <property type="entry name" value="Bac_DnaA"/>
    <property type="match status" value="1"/>
</dbReference>
<dbReference type="Pfam" id="PF08299">
    <property type="entry name" value="Bac_DnaA_C"/>
    <property type="match status" value="1"/>
</dbReference>
<dbReference type="Pfam" id="PF11638">
    <property type="entry name" value="DnaA_N"/>
    <property type="match status" value="1"/>
</dbReference>
<dbReference type="PRINTS" id="PR00051">
    <property type="entry name" value="DNAA"/>
</dbReference>
<dbReference type="SMART" id="SM00382">
    <property type="entry name" value="AAA"/>
    <property type="match status" value="1"/>
</dbReference>
<dbReference type="SMART" id="SM00760">
    <property type="entry name" value="Bac_DnaA_C"/>
    <property type="match status" value="1"/>
</dbReference>
<dbReference type="SUPFAM" id="SSF52540">
    <property type="entry name" value="P-loop containing nucleoside triphosphate hydrolases"/>
    <property type="match status" value="1"/>
</dbReference>
<dbReference type="SUPFAM" id="SSF48295">
    <property type="entry name" value="TrpR-like"/>
    <property type="match status" value="1"/>
</dbReference>
<dbReference type="PROSITE" id="PS01008">
    <property type="entry name" value="DNAA"/>
    <property type="match status" value="1"/>
</dbReference>
<sequence>MSVELWQQCVDLLRDELPSQQFNTWIRPLQVEAEGDELRVYAPNRFVLDWVNEKYLGRLLELLGERGEGQLPALSLLIGSKRSRTPRAAIVPSQTHVAPPPPVAPPPAPVQPVSAAPVVVPREELPPVTTAPSVSSDPYEPEEPSIDPLAAAMPAGAAPAVRTERNVQVEGALKHTSYLNRTFTFENFVEGKSNQLARAAAWQVADNLKHGYNPLFLYGGVGLGKTHLMHAVGNHLLKKNPNAKVVYLHSERFVADMVKALQLNAINEFKRFYRSVDALLIDDIQFFARKERSQEEFFHTFNALLEGGQQVILTSDRYPKEIEGLEERLKSRFGWGLTVAVEPPELETRVAILMKKAEQAKIELPHDAAFFIAQRIRSNVRELEGALKRVIAHSHFMGRPITIELIRESLKDLLALQDKLVSIDNIQRTVAEYYKIKISDLLSKRRSRSVARPRQVAMALSKELTNHSLPEIGVAFGGRDHTTVLHACRKIAQLRESDADIREDYKNLLRTLTT</sequence>
<name>DNAA_PSEA8</name>
<comment type="function">
    <text evidence="1">Plays an essential role in the initiation and regulation of chromosomal replication. ATP-DnaA binds to the origin of replication (oriC) to initiate formation of the DNA replication initiation complex once per cell cycle. Binds the DnaA box (a 9 base pair repeat at the origin) and separates the double-stranded (ds)DNA. Forms a right-handed helical filament on oriC DNA; dsDNA binds to the exterior of the filament while single-stranded (ss)DNA is stabiized in the filament's interior. The ATP-DnaA-oriC complex binds and stabilizes one strand of the AT-rich DNA unwinding element (DUE), permitting loading of DNA polymerase. After initiation quickly degrades to an ADP-DnaA complex that is not apt for DNA replication. Binds acidic phospholipids.</text>
</comment>
<comment type="subunit">
    <text evidence="1">Oligomerizes as a right-handed, spiral filament on DNA at oriC.</text>
</comment>
<comment type="subcellular location">
    <subcellularLocation>
        <location evidence="1">Cytoplasm</location>
    </subcellularLocation>
</comment>
<comment type="domain">
    <text evidence="1">Domain I is involved in oligomerization and binding regulators, domain II is flexibile and of varying length in different bacteria, domain III forms the AAA+ region, while domain IV binds dsDNA.</text>
</comment>
<comment type="similarity">
    <text evidence="1">Belongs to the DnaA family.</text>
</comment>
<reference key="1">
    <citation type="journal article" date="2009" name="Genome Res.">
        <title>Newly introduced genomic prophage islands are critical determinants of in vivo competitiveness in the Liverpool epidemic strain of Pseudomonas aeruginosa.</title>
        <authorList>
            <person name="Winstanley C."/>
            <person name="Langille M.G.I."/>
            <person name="Fothergill J.L."/>
            <person name="Kukavica-Ibrulj I."/>
            <person name="Paradis-Bleau C."/>
            <person name="Sanschagrin F."/>
            <person name="Thomson N.R."/>
            <person name="Winsor G.L."/>
            <person name="Quail M.A."/>
            <person name="Lennard N."/>
            <person name="Bignell A."/>
            <person name="Clarke L."/>
            <person name="Seeger K."/>
            <person name="Saunders D."/>
            <person name="Harris D."/>
            <person name="Parkhill J."/>
            <person name="Hancock R.E.W."/>
            <person name="Brinkman F.S.L."/>
            <person name="Levesque R.C."/>
        </authorList>
    </citation>
    <scope>NUCLEOTIDE SEQUENCE [LARGE SCALE GENOMIC DNA]</scope>
    <source>
        <strain>LESB58</strain>
    </source>
</reference>
<proteinExistence type="inferred from homology"/>
<protein>
    <recommendedName>
        <fullName evidence="1">Chromosomal replication initiator protein DnaA</fullName>
    </recommendedName>
</protein>